<name>GTR1_PIG</name>
<dbReference type="EMBL" id="X17058">
    <property type="protein sequence ID" value="CAA34904.1"/>
    <property type="molecule type" value="mRNA"/>
</dbReference>
<dbReference type="EMBL" id="GACC01000222">
    <property type="protein sequence ID" value="JAA53585.1"/>
    <property type="molecule type" value="mRNA"/>
</dbReference>
<dbReference type="PIR" id="S04223">
    <property type="entry name" value="S04223"/>
</dbReference>
<dbReference type="RefSeq" id="XP_020952567.1">
    <property type="nucleotide sequence ID" value="XM_021096908.1"/>
</dbReference>
<dbReference type="SMR" id="P20303"/>
<dbReference type="FunCoup" id="P20303">
    <property type="interactions" value="313"/>
</dbReference>
<dbReference type="GlyCosmos" id="P20303">
    <property type="glycosylation" value="1 site, No reported glycans"/>
</dbReference>
<dbReference type="GlyGen" id="P20303">
    <property type="glycosylation" value="1 site"/>
</dbReference>
<dbReference type="PaxDb" id="9823-ENSSSCP00000023111"/>
<dbReference type="PeptideAtlas" id="P20303"/>
<dbReference type="Ensembl" id="ENSSSCT00000072802.2">
    <property type="protein sequence ID" value="ENSSSCP00000062057.1"/>
    <property type="gene ID" value="ENSSSCG00000059879.1"/>
</dbReference>
<dbReference type="Ensembl" id="ENSSSCT00025018551.1">
    <property type="protein sequence ID" value="ENSSSCP00025007494.1"/>
    <property type="gene ID" value="ENSSSCG00025013928.1"/>
</dbReference>
<dbReference type="Ensembl" id="ENSSSCT00030043368.1">
    <property type="protein sequence ID" value="ENSSSCP00030019635.1"/>
    <property type="gene ID" value="ENSSSCG00030031281.1"/>
</dbReference>
<dbReference type="Ensembl" id="ENSSSCT00035060762.1">
    <property type="protein sequence ID" value="ENSSSCP00035024456.1"/>
    <property type="gene ID" value="ENSSSCG00035045709.1"/>
</dbReference>
<dbReference type="Ensembl" id="ENSSSCT00040026305.1">
    <property type="protein sequence ID" value="ENSSSCP00040011128.1"/>
    <property type="gene ID" value="ENSSSCG00040019486.1"/>
</dbReference>
<dbReference type="Ensembl" id="ENSSSCT00045014749.1">
    <property type="protein sequence ID" value="ENSSSCP00045010232.1"/>
    <property type="gene ID" value="ENSSSCG00045008726.1"/>
</dbReference>
<dbReference type="Ensembl" id="ENSSSCT00050033067.1">
    <property type="protein sequence ID" value="ENSSSCP00050013773.1"/>
    <property type="gene ID" value="ENSSSCG00050024549.1"/>
</dbReference>
<dbReference type="Ensembl" id="ENSSSCT00055028441.1">
    <property type="protein sequence ID" value="ENSSSCP00055022669.1"/>
    <property type="gene ID" value="ENSSSCG00055014418.1"/>
</dbReference>
<dbReference type="Ensembl" id="ENSSSCT00060068069.1">
    <property type="protein sequence ID" value="ENSSSCP00060029210.1"/>
    <property type="gene ID" value="ENSSSCG00060050095.1"/>
</dbReference>
<dbReference type="Ensembl" id="ENSSSCT00065006791.1">
    <property type="protein sequence ID" value="ENSSSCP00065002969.1"/>
    <property type="gene ID" value="ENSSSCG00065004975.1"/>
</dbReference>
<dbReference type="Ensembl" id="ENSSSCT00070058799.1">
    <property type="protein sequence ID" value="ENSSSCP00070050022.1"/>
    <property type="gene ID" value="ENSSSCG00070029283.1"/>
</dbReference>
<dbReference type="Ensembl" id="ENSSSCT00090037058">
    <property type="protein sequence ID" value="ENSSSCP00090023064"/>
    <property type="gene ID" value="ENSSSCG00090020902"/>
</dbReference>
<dbReference type="Ensembl" id="ENSSSCT00110044174">
    <property type="protein sequence ID" value="ENSSSCP00110031124"/>
    <property type="gene ID" value="ENSSSCG00110022815"/>
</dbReference>
<dbReference type="Ensembl" id="ENSSSCT00115036722">
    <property type="protein sequence ID" value="ENSSSCP00115034758"/>
    <property type="gene ID" value="ENSSSCG00115020703"/>
</dbReference>
<dbReference type="Ensembl" id="ENSSSCT00130017207">
    <property type="protein sequence ID" value="ENSSSCP00130011651"/>
    <property type="gene ID" value="ENSSSCG00130009250"/>
</dbReference>
<dbReference type="GeneID" id="102164419"/>
<dbReference type="eggNOG" id="KOG0569">
    <property type="taxonomic scope" value="Eukaryota"/>
</dbReference>
<dbReference type="GeneTree" id="ENSGT00940000156792"/>
<dbReference type="InParanoid" id="P20303"/>
<dbReference type="OrthoDB" id="4540492at2759"/>
<dbReference type="Reactome" id="R-SSC-189200">
    <property type="pathway name" value="Cellular hexose transport"/>
</dbReference>
<dbReference type="Reactome" id="R-SSC-196836">
    <property type="pathway name" value="Vitamin C (ascorbate) metabolism"/>
</dbReference>
<dbReference type="Reactome" id="R-SSC-422356">
    <property type="pathway name" value="Regulation of insulin secretion"/>
</dbReference>
<dbReference type="Reactome" id="R-SSC-5653890">
    <property type="pathway name" value="Lactose synthesis"/>
</dbReference>
<dbReference type="Proteomes" id="UP000008227">
    <property type="component" value="Chromosome 6"/>
</dbReference>
<dbReference type="Proteomes" id="UP000314985">
    <property type="component" value="Chromosome 6"/>
</dbReference>
<dbReference type="Proteomes" id="UP000694570">
    <property type="component" value="Unplaced"/>
</dbReference>
<dbReference type="Proteomes" id="UP000694571">
    <property type="component" value="Unplaced"/>
</dbReference>
<dbReference type="Proteomes" id="UP000694720">
    <property type="component" value="Unplaced"/>
</dbReference>
<dbReference type="Proteomes" id="UP000694722">
    <property type="component" value="Unplaced"/>
</dbReference>
<dbReference type="Proteomes" id="UP000694723">
    <property type="component" value="Unplaced"/>
</dbReference>
<dbReference type="Proteomes" id="UP000694724">
    <property type="component" value="Unplaced"/>
</dbReference>
<dbReference type="Proteomes" id="UP000694725">
    <property type="component" value="Unplaced"/>
</dbReference>
<dbReference type="Proteomes" id="UP000694726">
    <property type="component" value="Unplaced"/>
</dbReference>
<dbReference type="Proteomes" id="UP000694727">
    <property type="component" value="Unplaced"/>
</dbReference>
<dbReference type="Proteomes" id="UP000694728">
    <property type="component" value="Unplaced"/>
</dbReference>
<dbReference type="Bgee" id="ENSSSCG00000023920">
    <property type="expression patterns" value="Expressed in granulosa cell and 42 other cell types or tissues"/>
</dbReference>
<dbReference type="ExpressionAtlas" id="P20303">
    <property type="expression patterns" value="baseline and differential"/>
</dbReference>
<dbReference type="GO" id="GO:0016324">
    <property type="term" value="C:apical plasma membrane"/>
    <property type="evidence" value="ECO:0000318"/>
    <property type="project" value="GO_Central"/>
</dbReference>
<dbReference type="GO" id="GO:0016323">
    <property type="term" value="C:basolateral plasma membrane"/>
    <property type="evidence" value="ECO:0000318"/>
    <property type="project" value="GO_Central"/>
</dbReference>
<dbReference type="GO" id="GO:0030864">
    <property type="term" value="C:cortical actin cytoskeleton"/>
    <property type="evidence" value="ECO:0000250"/>
    <property type="project" value="UniProtKB"/>
</dbReference>
<dbReference type="GO" id="GO:0005829">
    <property type="term" value="C:cytosol"/>
    <property type="evidence" value="ECO:0007669"/>
    <property type="project" value="Ensembl"/>
</dbReference>
<dbReference type="GO" id="GO:0001674">
    <property type="term" value="C:female germ cell nucleus"/>
    <property type="evidence" value="ECO:0007669"/>
    <property type="project" value="Ensembl"/>
</dbReference>
<dbReference type="GO" id="GO:0001939">
    <property type="term" value="C:female pronucleus"/>
    <property type="evidence" value="ECO:0007669"/>
    <property type="project" value="Ensembl"/>
</dbReference>
<dbReference type="GO" id="GO:1990350">
    <property type="term" value="C:glucose transporter complex"/>
    <property type="evidence" value="ECO:0007669"/>
    <property type="project" value="Ensembl"/>
</dbReference>
<dbReference type="GO" id="GO:0000139">
    <property type="term" value="C:Golgi membrane"/>
    <property type="evidence" value="ECO:0007669"/>
    <property type="project" value="Ensembl"/>
</dbReference>
<dbReference type="GO" id="GO:0045121">
    <property type="term" value="C:membrane raft"/>
    <property type="evidence" value="ECO:0007669"/>
    <property type="project" value="Ensembl"/>
</dbReference>
<dbReference type="GO" id="GO:0030496">
    <property type="term" value="C:midbody"/>
    <property type="evidence" value="ECO:0007669"/>
    <property type="project" value="Ensembl"/>
</dbReference>
<dbReference type="GO" id="GO:0001917">
    <property type="term" value="C:photoreceptor inner segment"/>
    <property type="evidence" value="ECO:0007669"/>
    <property type="project" value="UniProtKB-SubCell"/>
</dbReference>
<dbReference type="GO" id="GO:0005886">
    <property type="term" value="C:plasma membrane"/>
    <property type="evidence" value="ECO:0000250"/>
    <property type="project" value="UniProtKB"/>
</dbReference>
<dbReference type="GO" id="GO:0098793">
    <property type="term" value="C:presynapse"/>
    <property type="evidence" value="ECO:0007669"/>
    <property type="project" value="Ensembl"/>
</dbReference>
<dbReference type="GO" id="GO:0031982">
    <property type="term" value="C:vesicle"/>
    <property type="evidence" value="ECO:0007669"/>
    <property type="project" value="Ensembl"/>
</dbReference>
<dbReference type="GO" id="GO:0055056">
    <property type="term" value="F:D-glucose transmembrane transporter activity"/>
    <property type="evidence" value="ECO:0000250"/>
    <property type="project" value="UniProtKB"/>
</dbReference>
<dbReference type="GO" id="GO:0033300">
    <property type="term" value="F:dehydroascorbic acid transmembrane transporter activity"/>
    <property type="evidence" value="ECO:0007669"/>
    <property type="project" value="Ensembl"/>
</dbReference>
<dbReference type="GO" id="GO:0015150">
    <property type="term" value="F:fucose transmembrane transporter activity"/>
    <property type="evidence" value="ECO:0007669"/>
    <property type="project" value="Ensembl"/>
</dbReference>
<dbReference type="GO" id="GO:0042802">
    <property type="term" value="F:identical protein binding"/>
    <property type="evidence" value="ECO:0007669"/>
    <property type="project" value="Ensembl"/>
</dbReference>
<dbReference type="GO" id="GO:0005324">
    <property type="term" value="F:long-chain fatty acid transmembrane transporter activity"/>
    <property type="evidence" value="ECO:0007669"/>
    <property type="project" value="Ensembl"/>
</dbReference>
<dbReference type="GO" id="GO:0042149">
    <property type="term" value="P:cellular response to glucose starvation"/>
    <property type="evidence" value="ECO:0007669"/>
    <property type="project" value="Ensembl"/>
</dbReference>
<dbReference type="GO" id="GO:0007417">
    <property type="term" value="P:central nervous system development"/>
    <property type="evidence" value="ECO:0007669"/>
    <property type="project" value="Ensembl"/>
</dbReference>
<dbReference type="GO" id="GO:0046323">
    <property type="term" value="P:D-glucose import"/>
    <property type="evidence" value="ECO:0000318"/>
    <property type="project" value="GO_Central"/>
</dbReference>
<dbReference type="GO" id="GO:0098708">
    <property type="term" value="P:D-glucose import across plasma membrane"/>
    <property type="evidence" value="ECO:0007669"/>
    <property type="project" value="Ensembl"/>
</dbReference>
<dbReference type="GO" id="GO:1904659">
    <property type="term" value="P:D-glucose transmembrane transport"/>
    <property type="evidence" value="ECO:0000250"/>
    <property type="project" value="UniProtKB"/>
</dbReference>
<dbReference type="GO" id="GO:0070837">
    <property type="term" value="P:dehydroascorbic acid transport"/>
    <property type="evidence" value="ECO:0000318"/>
    <property type="project" value="GO_Central"/>
</dbReference>
<dbReference type="GO" id="GO:0015911">
    <property type="term" value="P:long-chain fatty acid import across plasma membrane"/>
    <property type="evidence" value="ECO:0007669"/>
    <property type="project" value="Ensembl"/>
</dbReference>
<dbReference type="GO" id="GO:0045494">
    <property type="term" value="P:photoreceptor cell maintenance"/>
    <property type="evidence" value="ECO:0000250"/>
    <property type="project" value="UniProtKB"/>
</dbReference>
<dbReference type="GO" id="GO:0065003">
    <property type="term" value="P:protein-containing complex assembly"/>
    <property type="evidence" value="ECO:0000250"/>
    <property type="project" value="UniProtKB"/>
</dbReference>
<dbReference type="GO" id="GO:0032868">
    <property type="term" value="P:response to insulin"/>
    <property type="evidence" value="ECO:0000318"/>
    <property type="project" value="GO_Central"/>
</dbReference>
<dbReference type="GO" id="GO:0150104">
    <property type="term" value="P:transport across blood-brain barrier"/>
    <property type="evidence" value="ECO:0007669"/>
    <property type="project" value="Ensembl"/>
</dbReference>
<dbReference type="CDD" id="cd17431">
    <property type="entry name" value="MFS_GLUT_Class1"/>
    <property type="match status" value="1"/>
</dbReference>
<dbReference type="FunFam" id="1.20.1250.20:FF:000040">
    <property type="entry name" value="Solute carrier family 2, facilitated glucose transporter member 1"/>
    <property type="match status" value="1"/>
</dbReference>
<dbReference type="Gene3D" id="1.20.1250.20">
    <property type="entry name" value="MFS general substrate transporter like domains"/>
    <property type="match status" value="1"/>
</dbReference>
<dbReference type="InterPro" id="IPR002439">
    <property type="entry name" value="Glu_transpt_1"/>
</dbReference>
<dbReference type="InterPro" id="IPR045263">
    <property type="entry name" value="GLUT"/>
</dbReference>
<dbReference type="InterPro" id="IPR020846">
    <property type="entry name" value="MFS_dom"/>
</dbReference>
<dbReference type="InterPro" id="IPR005828">
    <property type="entry name" value="MFS_sugar_transport-like"/>
</dbReference>
<dbReference type="InterPro" id="IPR036259">
    <property type="entry name" value="MFS_trans_sf"/>
</dbReference>
<dbReference type="InterPro" id="IPR003663">
    <property type="entry name" value="Sugar/inositol_transpt"/>
</dbReference>
<dbReference type="InterPro" id="IPR005829">
    <property type="entry name" value="Sugar_transporter_CS"/>
</dbReference>
<dbReference type="NCBIfam" id="TIGR00879">
    <property type="entry name" value="SP"/>
    <property type="match status" value="1"/>
</dbReference>
<dbReference type="PANTHER" id="PTHR23503">
    <property type="entry name" value="SOLUTE CARRIER FAMILY 2"/>
    <property type="match status" value="1"/>
</dbReference>
<dbReference type="PANTHER" id="PTHR23503:SF51">
    <property type="entry name" value="SOLUTE CARRIER FAMILY 2, FACILITATED GLUCOSE TRANSPORTER MEMBER 1"/>
    <property type="match status" value="1"/>
</dbReference>
<dbReference type="Pfam" id="PF00083">
    <property type="entry name" value="Sugar_tr"/>
    <property type="match status" value="1"/>
</dbReference>
<dbReference type="PRINTS" id="PR01190">
    <property type="entry name" value="GLUCTRSPORT1"/>
</dbReference>
<dbReference type="PRINTS" id="PR00171">
    <property type="entry name" value="SUGRTRNSPORT"/>
</dbReference>
<dbReference type="SUPFAM" id="SSF103473">
    <property type="entry name" value="MFS general substrate transporter"/>
    <property type="match status" value="1"/>
</dbReference>
<dbReference type="PROSITE" id="PS50850">
    <property type="entry name" value="MFS"/>
    <property type="match status" value="1"/>
</dbReference>
<dbReference type="PROSITE" id="PS00216">
    <property type="entry name" value="SUGAR_TRANSPORT_1"/>
    <property type="match status" value="1"/>
</dbReference>
<dbReference type="PROSITE" id="PS00217">
    <property type="entry name" value="SUGAR_TRANSPORT_2"/>
    <property type="match status" value="1"/>
</dbReference>
<comment type="function">
    <text evidence="1 4 5">Facilitative glucose transporter, which is responsible for constitutive or basal glucose uptake. Has a very broad substrate specificity; can transport a wide range of aldoses including both pentoses and hexoses. Most important energy carrier of the brain: present at the blood-brain barrier and assures the energy-independent, facilitative transport of glucose into the brain (By similarity). In association with BSG and NXNL1, promotes retinal cone survival by increasing glucose uptake into photoreceptors (By similarity). Required for mesendoderm differentiation (By similarity).</text>
</comment>
<comment type="catalytic activity">
    <reaction evidence="1">
        <text>D-glucose(out) = D-glucose(in)</text>
        <dbReference type="Rhea" id="RHEA:60376"/>
        <dbReference type="ChEBI" id="CHEBI:4167"/>
    </reaction>
</comment>
<comment type="activity regulation">
    <text evidence="1">The uptake of glucose is inhibited by cytochalasin B. Glucose uptake is increased in response to phorbol ester 12-O-tetradecanoylphorbol-13-acetate (TPA) treatment: TPA-induced glucose uptake requires phosphorylation at Ser-226.</text>
</comment>
<comment type="subunit">
    <text evidence="1 2 4">Found in a complex with ADD2, DMTN and SLC2A1. Interacts (via C-terminus cytoplasmic region) with DMTN. Interacts with SNX27; the interaction is required when endocytosed to prevent degradation in lysosomes and promote recycling to the plasma membrane. Interacts with GIPC (via PDZ domain). Interacts with STOM. Interacts with SGTA (via Gln-rich region) (By similarity). Interacts with BSG (By similarity). Interacts with SMIM43; the interaction may promote SLC2A1-mediated glucose transport to meet the energy needs of mesendoderm differentiation (By similarity).</text>
</comment>
<comment type="subcellular location">
    <subcellularLocation>
        <location evidence="1">Cell membrane</location>
        <topology evidence="6">Multi-pass membrane protein</topology>
    </subcellularLocation>
    <subcellularLocation>
        <location evidence="4">Photoreceptor inner segment</location>
    </subcellularLocation>
</comment>
<comment type="PTM">
    <text evidence="1">Phosphorylation at Ser-226 by PKC promotes glucose uptake by increasing cell membrane localization.</text>
</comment>
<comment type="similarity">
    <text evidence="8">Belongs to the major facilitator superfamily. Sugar transporter (TC 2.A.1.1) family. Glucose transporter subfamily.</text>
</comment>
<sequence>MEPSSKKLTGRLMLAVGGAVLGSLQFGYNTGVINAPQKVIEEFYNQTWLHRYGESISPATLTTLWSLSVAIFSVGGMIGSFSVGLFVNRFGRRNSMLMMNLLAFISAVLMGFSKLGKSFEMLILGRFIIGVYCGLTTGFVPMYVGEVSPTALRGALGTLHQLGIVVGILIAQVFGLDSIMGNEELWPLLLSVIFIPALLQCVLLPFCPESPRFLLINRNEENRAKSVLKKLRGTADVTRDLQEMKEESRQMMREKKVTILELFRSAAYRQPILIAVVLQLSQQLSGINAVFYYSTSIFEKAGVQQPVYATIGSGIVNTAFTVVSLFVVERAGRRTLHLIGLAGMAGCAVLMTIALALLEQLPWMSYLSIVAIFGFVAFFEVGPGPIPWFIVAELFSQGPRPAAIAVAGFSNWTSNFIVGMCFQYVEQLCGPYVFIIFTVLLVLFFIFTYFKVPETKGRTFDEIASGFRQGGASQSDKTPEELFHPLGADSQV</sequence>
<accession>P20303</accession>
<accession>K9IVJ7</accession>
<feature type="chain" id="PRO_0000050340" description="Solute carrier family 2, facilitated glucose transporter member 1">
    <location>
        <begin position="1"/>
        <end position="492"/>
    </location>
</feature>
<feature type="topological domain" description="Cytoplasmic" evidence="1">
    <location>
        <begin position="1"/>
        <end position="11"/>
    </location>
</feature>
<feature type="transmembrane region" description="Helical; Name=1" evidence="1">
    <location>
        <begin position="12"/>
        <end position="33"/>
    </location>
</feature>
<feature type="topological domain" description="Extracellular" evidence="1">
    <location>
        <begin position="34"/>
        <end position="66"/>
    </location>
</feature>
<feature type="transmembrane region" description="Helical; Name=2" evidence="1">
    <location>
        <begin position="67"/>
        <end position="87"/>
    </location>
</feature>
<feature type="topological domain" description="Cytoplasmic" evidence="1">
    <location>
        <begin position="88"/>
        <end position="90"/>
    </location>
</feature>
<feature type="transmembrane region" description="Helical; Name=3" evidence="1">
    <location>
        <begin position="91"/>
        <end position="112"/>
    </location>
</feature>
<feature type="topological domain" description="Extracellular" evidence="1">
    <location>
        <begin position="113"/>
        <end position="120"/>
    </location>
</feature>
<feature type="transmembrane region" description="Helical; Name=4" evidence="1">
    <location>
        <begin position="121"/>
        <end position="144"/>
    </location>
</feature>
<feature type="topological domain" description="Cytoplasmic" evidence="1">
    <location>
        <begin position="145"/>
        <end position="155"/>
    </location>
</feature>
<feature type="transmembrane region" description="Helical; Name=5" evidence="1">
    <location>
        <begin position="156"/>
        <end position="176"/>
    </location>
</feature>
<feature type="topological domain" description="Extracellular" evidence="1">
    <location>
        <begin position="177"/>
        <end position="185"/>
    </location>
</feature>
<feature type="transmembrane region" description="Helical; Name=6" evidence="1">
    <location>
        <begin position="186"/>
        <end position="206"/>
    </location>
</feature>
<feature type="topological domain" description="Cytoplasmic" evidence="1">
    <location>
        <begin position="207"/>
        <end position="271"/>
    </location>
</feature>
<feature type="transmembrane region" description="Helical; Name=7" evidence="1">
    <location>
        <begin position="272"/>
        <end position="293"/>
    </location>
</feature>
<feature type="topological domain" description="Extracellular" evidence="1">
    <location>
        <begin position="294"/>
        <end position="306"/>
    </location>
</feature>
<feature type="transmembrane region" description="Helical; Name=8" evidence="1">
    <location>
        <begin position="307"/>
        <end position="328"/>
    </location>
</feature>
<feature type="topological domain" description="Cytoplasmic" evidence="1">
    <location>
        <begin position="329"/>
        <end position="334"/>
    </location>
</feature>
<feature type="transmembrane region" description="Helical; Name=9" evidence="1">
    <location>
        <begin position="335"/>
        <end position="355"/>
    </location>
</feature>
<feature type="topological domain" description="Extracellular" evidence="1">
    <location>
        <begin position="356"/>
        <end position="365"/>
    </location>
</feature>
<feature type="transmembrane region" description="Helical; Name=10" evidence="1">
    <location>
        <begin position="366"/>
        <end position="388"/>
    </location>
</feature>
<feature type="topological domain" description="Cytoplasmic" evidence="1">
    <location>
        <begin position="389"/>
        <end position="401"/>
    </location>
</feature>
<feature type="transmembrane region" description="Helical; Name=11" evidence="1">
    <location>
        <begin position="402"/>
        <end position="422"/>
    </location>
</feature>
<feature type="topological domain" description="Extracellular" evidence="1">
    <location>
        <begin position="423"/>
        <end position="429"/>
    </location>
</feature>
<feature type="transmembrane region" description="Helical; Name=12" evidence="1">
    <location>
        <begin position="430"/>
        <end position="450"/>
    </location>
</feature>
<feature type="region of interest" description="Disordered" evidence="7">
    <location>
        <begin position="468"/>
        <end position="492"/>
    </location>
</feature>
<feature type="binding site" evidence="3">
    <location>
        <position position="161"/>
    </location>
    <ligand>
        <name>D-glucose</name>
        <dbReference type="ChEBI" id="CHEBI:4167"/>
    </ligand>
</feature>
<feature type="binding site" evidence="3">
    <location>
        <begin position="282"/>
        <end position="283"/>
    </location>
    <ligand>
        <name>D-glucose</name>
        <dbReference type="ChEBI" id="CHEBI:4167"/>
    </ligand>
</feature>
<feature type="binding site" evidence="3">
    <location>
        <position position="288"/>
    </location>
    <ligand>
        <name>D-glucose</name>
        <dbReference type="ChEBI" id="CHEBI:4167"/>
    </ligand>
</feature>
<feature type="binding site" evidence="3">
    <location>
        <position position="317"/>
    </location>
    <ligand>
        <name>D-glucose</name>
        <dbReference type="ChEBI" id="CHEBI:4167"/>
    </ligand>
</feature>
<feature type="binding site" evidence="3">
    <location>
        <position position="380"/>
    </location>
    <ligand>
        <name>D-glucose</name>
        <dbReference type="ChEBI" id="CHEBI:4167"/>
    </ligand>
</feature>
<feature type="binding site" evidence="3">
    <location>
        <position position="388"/>
    </location>
    <ligand>
        <name>D-glucose</name>
        <dbReference type="ChEBI" id="CHEBI:4167"/>
    </ligand>
</feature>
<feature type="modified residue" description="N-acetylmethionine" evidence="1">
    <location>
        <position position="1"/>
    </location>
</feature>
<feature type="modified residue" description="Phosphoserine" evidence="1">
    <location>
        <position position="226"/>
    </location>
</feature>
<feature type="modified residue" description="Phosphoserine" evidence="1">
    <location>
        <position position="465"/>
    </location>
</feature>
<feature type="modified residue" description="Phosphothreonine" evidence="1">
    <location>
        <position position="478"/>
    </location>
</feature>
<feature type="modified residue" description="Phosphoserine" evidence="1">
    <location>
        <position position="490"/>
    </location>
</feature>
<feature type="glycosylation site" description="N-linked (GlcNAc...) asparagine" evidence="6">
    <location>
        <position position="45"/>
    </location>
</feature>
<reference key="1">
    <citation type="journal article" date="1989" name="Biol. Chem. Hoppe-Seyler">
        <title>cDNA cloning and sequence analysis of the glucose transporter from porcine blood-brain barrier.</title>
        <authorList>
            <person name="Weiler-Guettler H."/>
            <person name="Zinke H."/>
            <person name="Moeckel B."/>
            <person name="Frey A."/>
            <person name="Gassen H.G."/>
        </authorList>
    </citation>
    <scope>NUCLEOTIDE SEQUENCE [MRNA]</scope>
    <source>
        <tissue>Brain</tissue>
    </source>
</reference>
<reference key="2">
    <citation type="submission" date="2013-02" db="EMBL/GenBank/DDBJ databases">
        <title>Global gene expression profiling of alveolar macrophages by deep sequencing.</title>
        <authorList>
            <person name="Dawson H.D."/>
            <person name="Chen C.T."/>
        </authorList>
    </citation>
    <scope>NUCLEOTIDE SEQUENCE [MRNA]</scope>
</reference>
<gene>
    <name evidence="1" type="primary">SLC2A1</name>
    <name evidence="1" type="synonym">GLUT1</name>
</gene>
<proteinExistence type="evidence at transcript level"/>
<organism>
    <name type="scientific">Sus scrofa</name>
    <name type="common">Pig</name>
    <dbReference type="NCBI Taxonomy" id="9823"/>
    <lineage>
        <taxon>Eukaryota</taxon>
        <taxon>Metazoa</taxon>
        <taxon>Chordata</taxon>
        <taxon>Craniata</taxon>
        <taxon>Vertebrata</taxon>
        <taxon>Euteleostomi</taxon>
        <taxon>Mammalia</taxon>
        <taxon>Eutheria</taxon>
        <taxon>Laurasiatheria</taxon>
        <taxon>Artiodactyla</taxon>
        <taxon>Suina</taxon>
        <taxon>Suidae</taxon>
        <taxon>Sus</taxon>
    </lineage>
</organism>
<protein>
    <recommendedName>
        <fullName evidence="8">Solute carrier family 2, facilitated glucose transporter member 1</fullName>
    </recommendedName>
    <alternativeName>
        <fullName evidence="1">Glucose transporter type 1, erythrocyte/brain</fullName>
        <shortName evidence="1">GLUT-1</shortName>
    </alternativeName>
</protein>
<keyword id="KW-0007">Acetylation</keyword>
<keyword id="KW-1003">Cell membrane</keyword>
<keyword id="KW-0325">Glycoprotein</keyword>
<keyword id="KW-0472">Membrane</keyword>
<keyword id="KW-0597">Phosphoprotein</keyword>
<keyword id="KW-1185">Reference proteome</keyword>
<keyword id="KW-0762">Sugar transport</keyword>
<keyword id="KW-0812">Transmembrane</keyword>
<keyword id="KW-1133">Transmembrane helix</keyword>
<keyword id="KW-0813">Transport</keyword>
<evidence type="ECO:0000250" key="1">
    <source>
        <dbReference type="UniProtKB" id="P11166"/>
    </source>
</evidence>
<evidence type="ECO:0000250" key="2">
    <source>
        <dbReference type="UniProtKB" id="P11167"/>
    </source>
</evidence>
<evidence type="ECO:0000250" key="3">
    <source>
        <dbReference type="UniProtKB" id="P11169"/>
    </source>
</evidence>
<evidence type="ECO:0000250" key="4">
    <source>
        <dbReference type="UniProtKB" id="P17809"/>
    </source>
</evidence>
<evidence type="ECO:0000250" key="5">
    <source>
        <dbReference type="UniProtKB" id="P46896"/>
    </source>
</evidence>
<evidence type="ECO:0000255" key="6"/>
<evidence type="ECO:0000256" key="7">
    <source>
        <dbReference type="SAM" id="MobiDB-lite"/>
    </source>
</evidence>
<evidence type="ECO:0000305" key="8"/>